<organism>
    <name type="scientific">Yersinia pseudotuberculosis serotype I (strain IP32953)</name>
    <dbReference type="NCBI Taxonomy" id="273123"/>
    <lineage>
        <taxon>Bacteria</taxon>
        <taxon>Pseudomonadati</taxon>
        <taxon>Pseudomonadota</taxon>
        <taxon>Gammaproteobacteria</taxon>
        <taxon>Enterobacterales</taxon>
        <taxon>Yersiniaceae</taxon>
        <taxon>Yersinia</taxon>
    </lineage>
</organism>
<dbReference type="EC" id="3.4.21.88" evidence="1"/>
<dbReference type="EMBL" id="BX936398">
    <property type="protein sequence ID" value="CAH19610.1"/>
    <property type="molecule type" value="Genomic_DNA"/>
</dbReference>
<dbReference type="RefSeq" id="WP_002209090.1">
    <property type="nucleotide sequence ID" value="NZ_CP009712.1"/>
</dbReference>
<dbReference type="SMR" id="Q66FG7"/>
<dbReference type="MEROPS" id="S24.001"/>
<dbReference type="GeneID" id="57974290"/>
<dbReference type="KEGG" id="ypo:BZ17_2200"/>
<dbReference type="KEGG" id="yps:YPTB0370"/>
<dbReference type="PATRIC" id="fig|273123.14.peg.2329"/>
<dbReference type="Proteomes" id="UP000001011">
    <property type="component" value="Chromosome"/>
</dbReference>
<dbReference type="GO" id="GO:0003677">
    <property type="term" value="F:DNA binding"/>
    <property type="evidence" value="ECO:0007669"/>
    <property type="project" value="UniProtKB-UniRule"/>
</dbReference>
<dbReference type="GO" id="GO:0004252">
    <property type="term" value="F:serine-type endopeptidase activity"/>
    <property type="evidence" value="ECO:0007669"/>
    <property type="project" value="UniProtKB-UniRule"/>
</dbReference>
<dbReference type="GO" id="GO:0006281">
    <property type="term" value="P:DNA repair"/>
    <property type="evidence" value="ECO:0007669"/>
    <property type="project" value="UniProtKB-UniRule"/>
</dbReference>
<dbReference type="GO" id="GO:0006260">
    <property type="term" value="P:DNA replication"/>
    <property type="evidence" value="ECO:0007669"/>
    <property type="project" value="UniProtKB-UniRule"/>
</dbReference>
<dbReference type="GO" id="GO:0045892">
    <property type="term" value="P:negative regulation of DNA-templated transcription"/>
    <property type="evidence" value="ECO:0007669"/>
    <property type="project" value="UniProtKB-UniRule"/>
</dbReference>
<dbReference type="GO" id="GO:0006508">
    <property type="term" value="P:proteolysis"/>
    <property type="evidence" value="ECO:0007669"/>
    <property type="project" value="InterPro"/>
</dbReference>
<dbReference type="GO" id="GO:0009432">
    <property type="term" value="P:SOS response"/>
    <property type="evidence" value="ECO:0007669"/>
    <property type="project" value="UniProtKB-UniRule"/>
</dbReference>
<dbReference type="CDD" id="cd06529">
    <property type="entry name" value="S24_LexA-like"/>
    <property type="match status" value="1"/>
</dbReference>
<dbReference type="FunFam" id="1.10.10.10:FF:000009">
    <property type="entry name" value="LexA repressor"/>
    <property type="match status" value="1"/>
</dbReference>
<dbReference type="FunFam" id="2.10.109.10:FF:000001">
    <property type="entry name" value="LexA repressor"/>
    <property type="match status" value="1"/>
</dbReference>
<dbReference type="Gene3D" id="2.10.109.10">
    <property type="entry name" value="Umud Fragment, subunit A"/>
    <property type="match status" value="1"/>
</dbReference>
<dbReference type="Gene3D" id="1.10.10.10">
    <property type="entry name" value="Winged helix-like DNA-binding domain superfamily/Winged helix DNA-binding domain"/>
    <property type="match status" value="1"/>
</dbReference>
<dbReference type="HAMAP" id="MF_00015">
    <property type="entry name" value="LexA"/>
    <property type="match status" value="1"/>
</dbReference>
<dbReference type="InterPro" id="IPR006200">
    <property type="entry name" value="LexA"/>
</dbReference>
<dbReference type="InterPro" id="IPR039418">
    <property type="entry name" value="LexA-like"/>
</dbReference>
<dbReference type="InterPro" id="IPR036286">
    <property type="entry name" value="LexA/Signal_pep-like_sf"/>
</dbReference>
<dbReference type="InterPro" id="IPR006199">
    <property type="entry name" value="LexA_DNA-bd_dom"/>
</dbReference>
<dbReference type="InterPro" id="IPR050077">
    <property type="entry name" value="LexA_repressor"/>
</dbReference>
<dbReference type="InterPro" id="IPR006197">
    <property type="entry name" value="Peptidase_S24_LexA"/>
</dbReference>
<dbReference type="InterPro" id="IPR015927">
    <property type="entry name" value="Peptidase_S24_S26A/B/C"/>
</dbReference>
<dbReference type="InterPro" id="IPR036388">
    <property type="entry name" value="WH-like_DNA-bd_sf"/>
</dbReference>
<dbReference type="InterPro" id="IPR036390">
    <property type="entry name" value="WH_DNA-bd_sf"/>
</dbReference>
<dbReference type="NCBIfam" id="TIGR00498">
    <property type="entry name" value="lexA"/>
    <property type="match status" value="1"/>
</dbReference>
<dbReference type="PANTHER" id="PTHR33516">
    <property type="entry name" value="LEXA REPRESSOR"/>
    <property type="match status" value="1"/>
</dbReference>
<dbReference type="PANTHER" id="PTHR33516:SF2">
    <property type="entry name" value="LEXA REPRESSOR-RELATED"/>
    <property type="match status" value="1"/>
</dbReference>
<dbReference type="Pfam" id="PF01726">
    <property type="entry name" value="LexA_DNA_bind"/>
    <property type="match status" value="1"/>
</dbReference>
<dbReference type="Pfam" id="PF00717">
    <property type="entry name" value="Peptidase_S24"/>
    <property type="match status" value="1"/>
</dbReference>
<dbReference type="PRINTS" id="PR00726">
    <property type="entry name" value="LEXASERPTASE"/>
</dbReference>
<dbReference type="SUPFAM" id="SSF51306">
    <property type="entry name" value="LexA/Signal peptidase"/>
    <property type="match status" value="1"/>
</dbReference>
<dbReference type="SUPFAM" id="SSF46785">
    <property type="entry name" value="Winged helix' DNA-binding domain"/>
    <property type="match status" value="1"/>
</dbReference>
<evidence type="ECO:0000255" key="1">
    <source>
        <dbReference type="HAMAP-Rule" id="MF_00015"/>
    </source>
</evidence>
<feature type="chain" id="PRO_0000170116" description="LexA repressor">
    <location>
        <begin position="1"/>
        <end position="202"/>
    </location>
</feature>
<feature type="DNA-binding region" description="H-T-H motif" evidence="1">
    <location>
        <begin position="28"/>
        <end position="48"/>
    </location>
</feature>
<feature type="active site" description="For autocatalytic cleavage activity" evidence="1">
    <location>
        <position position="119"/>
    </location>
</feature>
<feature type="active site" description="For autocatalytic cleavage activity" evidence="1">
    <location>
        <position position="156"/>
    </location>
</feature>
<feature type="site" description="Cleavage; by autolysis" evidence="1">
    <location>
        <begin position="84"/>
        <end position="85"/>
    </location>
</feature>
<gene>
    <name evidence="1" type="primary">lexA</name>
    <name type="ordered locus">YPTB0370</name>
</gene>
<keyword id="KW-0068">Autocatalytic cleavage</keyword>
<keyword id="KW-0227">DNA damage</keyword>
<keyword id="KW-0234">DNA repair</keyword>
<keyword id="KW-0235">DNA replication</keyword>
<keyword id="KW-0238">DNA-binding</keyword>
<keyword id="KW-0378">Hydrolase</keyword>
<keyword id="KW-0678">Repressor</keyword>
<keyword id="KW-0742">SOS response</keyword>
<keyword id="KW-0804">Transcription</keyword>
<keyword id="KW-0805">Transcription regulation</keyword>
<accession>Q66FG7</accession>
<proteinExistence type="inferred from homology"/>
<sequence length="202" mass="22365">MKALTTRQQEVYDLVRDHLAQTGMPPTRAEIAQRLGFRSPNAAEEHLKALARKGVIEIVSGASRGIRLLMEEEEGLPLIGRVAAGEPLLAQQHIEGHYKVDPSLFKPGADFLLRVNGMSMRDIGILDGDLLAVHKTQDVRNGQVVVARIDDEVTVKRLKKQGNIVHLLPENSEFQPIVVDLREQSFTIEGLAVGVIRNGDWI</sequence>
<reference key="1">
    <citation type="journal article" date="2004" name="Proc. Natl. Acad. Sci. U.S.A.">
        <title>Insights into the evolution of Yersinia pestis through whole-genome comparison with Yersinia pseudotuberculosis.</title>
        <authorList>
            <person name="Chain P.S.G."/>
            <person name="Carniel E."/>
            <person name="Larimer F.W."/>
            <person name="Lamerdin J."/>
            <person name="Stoutland P.O."/>
            <person name="Regala W.M."/>
            <person name="Georgescu A.M."/>
            <person name="Vergez L.M."/>
            <person name="Land M.L."/>
            <person name="Motin V.L."/>
            <person name="Brubaker R.R."/>
            <person name="Fowler J."/>
            <person name="Hinnebusch J."/>
            <person name="Marceau M."/>
            <person name="Medigue C."/>
            <person name="Simonet M."/>
            <person name="Chenal-Francisque V."/>
            <person name="Souza B."/>
            <person name="Dacheux D."/>
            <person name="Elliott J.M."/>
            <person name="Derbise A."/>
            <person name="Hauser L.J."/>
            <person name="Garcia E."/>
        </authorList>
    </citation>
    <scope>NUCLEOTIDE SEQUENCE [LARGE SCALE GENOMIC DNA]</scope>
    <source>
        <strain>IP32953</strain>
    </source>
</reference>
<name>LEXA_YERPS</name>
<protein>
    <recommendedName>
        <fullName evidence="1">LexA repressor</fullName>
        <ecNumber evidence="1">3.4.21.88</ecNumber>
    </recommendedName>
</protein>
<comment type="function">
    <text evidence="1">Represses a number of genes involved in the response to DNA damage (SOS response), including recA and lexA. Binds to the 16 bp palindromic sequence 5'-CTGTATATATATACAG-3'. In the presence of single-stranded DNA, RecA interacts with LexA causing an autocatalytic cleavage which disrupts the DNA-binding part of LexA, leading to derepression of the SOS regulon and eventually DNA repair.</text>
</comment>
<comment type="catalytic activity">
    <reaction evidence="1">
        <text>Hydrolysis of Ala-|-Gly bond in repressor LexA.</text>
        <dbReference type="EC" id="3.4.21.88"/>
    </reaction>
</comment>
<comment type="subunit">
    <text evidence="1">Homodimer.</text>
</comment>
<comment type="similarity">
    <text evidence="1">Belongs to the peptidase S24 family.</text>
</comment>